<name>RL16_THEFY</name>
<sequence length="138" mass="15519">MLIPRKVKHRKQHHPSLRGRAKGGTSVHFGEYGIQALESAYVTNRQIEAARIAMTRHIRRGGKVWINIFPDRPLTKKPAETRMGSGKGSPEWWVAPVKAGRVMFELAGVPEPVAKEALRRAIHKLPMKCKVVKREAGE</sequence>
<comment type="function">
    <text evidence="1">Binds 23S rRNA and is also seen to make contacts with the A and possibly P site tRNAs.</text>
</comment>
<comment type="subunit">
    <text evidence="1">Part of the 50S ribosomal subunit.</text>
</comment>
<comment type="similarity">
    <text evidence="1">Belongs to the universal ribosomal protein uL16 family.</text>
</comment>
<reference key="1">
    <citation type="journal article" date="2007" name="J. Bacteriol.">
        <title>Genome sequence and analysis of the soil cellulolytic actinomycete Thermobifida fusca YX.</title>
        <authorList>
            <person name="Lykidis A."/>
            <person name="Mavromatis K."/>
            <person name="Ivanova N."/>
            <person name="Anderson I."/>
            <person name="Land M."/>
            <person name="DiBartolo G."/>
            <person name="Martinez M."/>
            <person name="Lapidus A."/>
            <person name="Lucas S."/>
            <person name="Copeland A."/>
            <person name="Richardson P."/>
            <person name="Wilson D.B."/>
            <person name="Kyrpides N."/>
        </authorList>
    </citation>
    <scope>NUCLEOTIDE SEQUENCE [LARGE SCALE GENOMIC DNA]</scope>
    <source>
        <strain>YX</strain>
    </source>
</reference>
<gene>
    <name evidence="1" type="primary">rplP</name>
    <name type="ordered locus">Tfu_2639</name>
</gene>
<evidence type="ECO:0000255" key="1">
    <source>
        <dbReference type="HAMAP-Rule" id="MF_01342"/>
    </source>
</evidence>
<evidence type="ECO:0000256" key="2">
    <source>
        <dbReference type="SAM" id="MobiDB-lite"/>
    </source>
</evidence>
<evidence type="ECO:0000305" key="3"/>
<feature type="chain" id="PRO_0000062234" description="Large ribosomal subunit protein uL16">
    <location>
        <begin position="1"/>
        <end position="138"/>
    </location>
</feature>
<feature type="region of interest" description="Disordered" evidence="2">
    <location>
        <begin position="1"/>
        <end position="22"/>
    </location>
</feature>
<feature type="compositionally biased region" description="Basic residues" evidence="2">
    <location>
        <begin position="1"/>
        <end position="21"/>
    </location>
</feature>
<keyword id="KW-0687">Ribonucleoprotein</keyword>
<keyword id="KW-0689">Ribosomal protein</keyword>
<keyword id="KW-0694">RNA-binding</keyword>
<keyword id="KW-0699">rRNA-binding</keyword>
<keyword id="KW-0820">tRNA-binding</keyword>
<dbReference type="EMBL" id="CP000088">
    <property type="protein sequence ID" value="AAZ56672.1"/>
    <property type="molecule type" value="Genomic_DNA"/>
</dbReference>
<dbReference type="RefSeq" id="WP_011293062.1">
    <property type="nucleotide sequence ID" value="NC_007333.1"/>
</dbReference>
<dbReference type="SMR" id="Q47LK0"/>
<dbReference type="STRING" id="269800.Tfu_2639"/>
<dbReference type="KEGG" id="tfu:Tfu_2639"/>
<dbReference type="eggNOG" id="COG0197">
    <property type="taxonomic scope" value="Bacteria"/>
</dbReference>
<dbReference type="HOGENOM" id="CLU_078858_2_1_11"/>
<dbReference type="OrthoDB" id="9802589at2"/>
<dbReference type="GO" id="GO:0022625">
    <property type="term" value="C:cytosolic large ribosomal subunit"/>
    <property type="evidence" value="ECO:0007669"/>
    <property type="project" value="TreeGrafter"/>
</dbReference>
<dbReference type="GO" id="GO:0019843">
    <property type="term" value="F:rRNA binding"/>
    <property type="evidence" value="ECO:0007669"/>
    <property type="project" value="UniProtKB-UniRule"/>
</dbReference>
<dbReference type="GO" id="GO:0003735">
    <property type="term" value="F:structural constituent of ribosome"/>
    <property type="evidence" value="ECO:0007669"/>
    <property type="project" value="InterPro"/>
</dbReference>
<dbReference type="GO" id="GO:0000049">
    <property type="term" value="F:tRNA binding"/>
    <property type="evidence" value="ECO:0007669"/>
    <property type="project" value="UniProtKB-KW"/>
</dbReference>
<dbReference type="GO" id="GO:0006412">
    <property type="term" value="P:translation"/>
    <property type="evidence" value="ECO:0007669"/>
    <property type="project" value="UniProtKB-UniRule"/>
</dbReference>
<dbReference type="CDD" id="cd01433">
    <property type="entry name" value="Ribosomal_L16_L10e"/>
    <property type="match status" value="1"/>
</dbReference>
<dbReference type="FunFam" id="3.90.1170.10:FF:000001">
    <property type="entry name" value="50S ribosomal protein L16"/>
    <property type="match status" value="1"/>
</dbReference>
<dbReference type="Gene3D" id="3.90.1170.10">
    <property type="entry name" value="Ribosomal protein L10e/L16"/>
    <property type="match status" value="1"/>
</dbReference>
<dbReference type="HAMAP" id="MF_01342">
    <property type="entry name" value="Ribosomal_uL16"/>
    <property type="match status" value="1"/>
</dbReference>
<dbReference type="InterPro" id="IPR047873">
    <property type="entry name" value="Ribosomal_uL16"/>
</dbReference>
<dbReference type="InterPro" id="IPR000114">
    <property type="entry name" value="Ribosomal_uL16_bact-type"/>
</dbReference>
<dbReference type="InterPro" id="IPR020798">
    <property type="entry name" value="Ribosomal_uL16_CS"/>
</dbReference>
<dbReference type="InterPro" id="IPR016180">
    <property type="entry name" value="Ribosomal_uL16_dom"/>
</dbReference>
<dbReference type="InterPro" id="IPR036920">
    <property type="entry name" value="Ribosomal_uL16_sf"/>
</dbReference>
<dbReference type="NCBIfam" id="TIGR01164">
    <property type="entry name" value="rplP_bact"/>
    <property type="match status" value="1"/>
</dbReference>
<dbReference type="PANTHER" id="PTHR12220">
    <property type="entry name" value="50S/60S RIBOSOMAL PROTEIN L16"/>
    <property type="match status" value="1"/>
</dbReference>
<dbReference type="PANTHER" id="PTHR12220:SF13">
    <property type="entry name" value="LARGE RIBOSOMAL SUBUNIT PROTEIN UL16M"/>
    <property type="match status" value="1"/>
</dbReference>
<dbReference type="Pfam" id="PF00252">
    <property type="entry name" value="Ribosomal_L16"/>
    <property type="match status" value="1"/>
</dbReference>
<dbReference type="PRINTS" id="PR00060">
    <property type="entry name" value="RIBOSOMALL16"/>
</dbReference>
<dbReference type="SUPFAM" id="SSF54686">
    <property type="entry name" value="Ribosomal protein L16p/L10e"/>
    <property type="match status" value="1"/>
</dbReference>
<dbReference type="PROSITE" id="PS00586">
    <property type="entry name" value="RIBOSOMAL_L16_1"/>
    <property type="match status" value="1"/>
</dbReference>
<dbReference type="PROSITE" id="PS00701">
    <property type="entry name" value="RIBOSOMAL_L16_2"/>
    <property type="match status" value="1"/>
</dbReference>
<proteinExistence type="inferred from homology"/>
<protein>
    <recommendedName>
        <fullName evidence="1">Large ribosomal subunit protein uL16</fullName>
    </recommendedName>
    <alternativeName>
        <fullName evidence="3">50S ribosomal protein L16</fullName>
    </alternativeName>
</protein>
<accession>Q47LK0</accession>
<organism>
    <name type="scientific">Thermobifida fusca (strain YX)</name>
    <dbReference type="NCBI Taxonomy" id="269800"/>
    <lineage>
        <taxon>Bacteria</taxon>
        <taxon>Bacillati</taxon>
        <taxon>Actinomycetota</taxon>
        <taxon>Actinomycetes</taxon>
        <taxon>Streptosporangiales</taxon>
        <taxon>Nocardiopsidaceae</taxon>
        <taxon>Thermobifida</taxon>
    </lineage>
</organism>